<keyword id="KW-0002">3D-structure</keyword>
<keyword id="KW-0903">Direct protein sequencing</keyword>
<keyword id="KW-1035">Host cytoplasm</keyword>
<keyword id="KW-0433">Leucine-rich repeat</keyword>
<keyword id="KW-0677">Repeat</keyword>
<keyword id="KW-0964">Secreted</keyword>
<keyword id="KW-0732">Signal</keyword>
<keyword id="KW-0843">Virulence</keyword>
<protein>
    <recommendedName>
        <fullName evidence="12">Internalin C</fullName>
        <shortName evidence="12">InlC</shortName>
    </recommendedName>
    <alternativeName>
        <fullName evidence="13">Internalin-related protein A</fullName>
    </alternativeName>
</protein>
<gene>
    <name evidence="12" type="primary">inlC</name>
    <name evidence="13" type="synonym">irpA</name>
</gene>
<accession>P71451</accession>
<accession>Q48787</accession>
<accession>Q799Z7</accession>
<organism>
    <name type="scientific">Listeria monocytogenes serotype 1/2a (strain EGD / Mackaness)</name>
    <dbReference type="NCBI Taxonomy" id="1334565"/>
    <lineage>
        <taxon>Bacteria</taxon>
        <taxon>Bacillati</taxon>
        <taxon>Bacillota</taxon>
        <taxon>Bacilli</taxon>
        <taxon>Bacillales</taxon>
        <taxon>Listeriaceae</taxon>
        <taxon>Listeria</taxon>
    </lineage>
</organism>
<feature type="signal peptide" evidence="8 10">
    <location>
        <begin position="1"/>
        <end position="34"/>
    </location>
</feature>
<feature type="chain" id="PRO_5015096846" description="Internalin C" evidence="1">
    <location>
        <begin position="35"/>
        <end position="297"/>
    </location>
</feature>
<feature type="repeat" description="LRR 1" evidence="1">
    <location>
        <begin position="74"/>
        <end position="96"/>
    </location>
</feature>
<feature type="repeat" description="LRR 2" evidence="1">
    <location>
        <begin position="97"/>
        <end position="120"/>
    </location>
</feature>
<feature type="repeat" description="LRR 3" evidence="1">
    <location>
        <begin position="122"/>
        <end position="139"/>
    </location>
</feature>
<feature type="repeat" description="LRR 4" evidence="1">
    <location>
        <begin position="140"/>
        <end position="161"/>
    </location>
</feature>
<feature type="repeat" description="LRR 5" evidence="1">
    <location>
        <begin position="162"/>
        <end position="184"/>
    </location>
</feature>
<feature type="repeat" description="LRR 6" evidence="1">
    <location>
        <begin position="186"/>
        <end position="207"/>
    </location>
</feature>
<feature type="mutagenesis site" description="Reduced binding to the SH3 6 domain of human DNMBP (Tuba), decreased bacterial spreading in an infected polarized enterocyte cell line, host cell junctions are no longer perturbed." evidence="7">
    <original>F</original>
    <variation>A</variation>
    <location>
        <position position="146"/>
    </location>
</feature>
<feature type="mutagenesis site" description="Reduced binding to the SH3 6 domain of human DNMBP (Tuba); conflicting results are also found. Host NF-kappa-B is still not translocated into the nucleus, decreased virulence in C57BL/6 mice, bacteria replicate less well in mouse liver." evidence="4 6 7">
    <original>K</original>
    <variation>A</variation>
    <location>
        <position position="173"/>
    </location>
</feature>
<feature type="mutagenesis site" description="Prevents InlC-only crystals." evidence="7">
    <original>YY</original>
    <variation>AA</variation>
    <location>
        <begin position="246"/>
        <end position="247"/>
    </location>
</feature>
<feature type="sequence conflict" description="In Ref. 2; CAA67098." evidence="14" ref="2">
    <original>V</original>
    <variation>A</variation>
    <location>
        <position position="56"/>
    </location>
</feature>
<feature type="sequence conflict" description="In Ref. 2; CAA67098." evidence="14" ref="2">
    <original>TNT</original>
    <variation>ANA</variation>
    <location>
        <begin position="232"/>
        <end position="234"/>
    </location>
</feature>
<feature type="helix" evidence="18">
    <location>
        <begin position="43"/>
        <end position="46"/>
    </location>
</feature>
<feature type="helix" evidence="18">
    <location>
        <begin position="50"/>
        <end position="60"/>
    </location>
</feature>
<feature type="strand" evidence="18">
    <location>
        <begin position="67"/>
        <end position="69"/>
    </location>
</feature>
<feature type="helix" evidence="18">
    <location>
        <begin position="71"/>
        <end position="74"/>
    </location>
</feature>
<feature type="strand" evidence="18">
    <location>
        <begin position="78"/>
        <end position="81"/>
    </location>
</feature>
<feature type="helix" evidence="18">
    <location>
        <begin position="93"/>
        <end position="95"/>
    </location>
</feature>
<feature type="strand" evidence="18">
    <location>
        <begin position="101"/>
        <end position="103"/>
    </location>
</feature>
<feature type="helix" evidence="18">
    <location>
        <begin position="113"/>
        <end position="115"/>
    </location>
</feature>
<feature type="strand" evidence="18">
    <location>
        <begin position="123"/>
        <end position="125"/>
    </location>
</feature>
<feature type="strand" evidence="18">
    <location>
        <begin position="144"/>
        <end position="146"/>
    </location>
</feature>
<feature type="strand" evidence="18">
    <location>
        <begin position="153"/>
        <end position="155"/>
    </location>
</feature>
<feature type="helix" evidence="18">
    <location>
        <begin position="156"/>
        <end position="158"/>
    </location>
</feature>
<feature type="strand" evidence="18">
    <location>
        <begin position="166"/>
        <end position="168"/>
    </location>
</feature>
<feature type="helix" evidence="18">
    <location>
        <begin position="178"/>
        <end position="182"/>
    </location>
</feature>
<feature type="strand" evidence="18">
    <location>
        <begin position="188"/>
        <end position="190"/>
    </location>
</feature>
<feature type="helix" evidence="19">
    <location>
        <begin position="202"/>
        <end position="204"/>
    </location>
</feature>
<feature type="strand" evidence="18">
    <location>
        <begin position="210"/>
        <end position="219"/>
    </location>
</feature>
<feature type="strand" evidence="18">
    <location>
        <begin position="227"/>
        <end position="232"/>
    </location>
</feature>
<feature type="strand" evidence="18">
    <location>
        <begin position="246"/>
        <end position="248"/>
    </location>
</feature>
<feature type="helix" evidence="18">
    <location>
        <begin position="249"/>
        <end position="251"/>
    </location>
</feature>
<feature type="strand" evidence="18">
    <location>
        <begin position="253"/>
        <end position="255"/>
    </location>
</feature>
<feature type="strand" evidence="18">
    <location>
        <begin position="258"/>
        <end position="262"/>
    </location>
</feature>
<feature type="strand" evidence="18">
    <location>
        <begin position="268"/>
        <end position="280"/>
    </location>
</feature>
<feature type="strand" evidence="18">
    <location>
        <begin position="283"/>
        <end position="296"/>
    </location>
</feature>
<sequence>MLKKNNWLQNAVIAMLVLIVGLCINMGSGTKVQAESIQRPTPINQVFPDPGLANAVKQNLGKQSVTDLVSQKELSGVQNFNGDNSNIQSLAGMQFFTNLKELHLSHNQISDLSPLKDLTKLEELSVNRNRLKNLNGIPSACLSRLFLDNNELRDTDSLIHLKNLEILSIRNNKLKSIVMLGFLSKLEVLDLHGNEITNTGGLTRLKKVNWIDLTGQKCVNEPVKYQPELYITNTVKDPDGRWISPYYISNGGSYVDGCVLWELPVYTDEVSYKFSEYINVGETEAIFDGTVTQPIKN</sequence>
<dbReference type="EMBL" id="X95822">
    <property type="protein sequence ID" value="CAA65088.1"/>
    <property type="molecule type" value="Genomic_DNA"/>
</dbReference>
<dbReference type="EMBL" id="X98458">
    <property type="protein sequence ID" value="CAA67098.1"/>
    <property type="molecule type" value="Genomic_DNA"/>
</dbReference>
<dbReference type="EMBL" id="Y07640">
    <property type="protein sequence ID" value="CAA68919.1"/>
    <property type="molecule type" value="Genomic_DNA"/>
</dbReference>
<dbReference type="PDB" id="1XEU">
    <property type="method" value="X-ray"/>
    <property type="resolution" value="2.05 A"/>
    <property type="chains" value="A=35-297"/>
</dbReference>
<dbReference type="PDB" id="4CC4">
    <property type="method" value="X-ray"/>
    <property type="resolution" value="2.60 A"/>
    <property type="chains" value="A/C/E=35-297"/>
</dbReference>
<dbReference type="PDBsum" id="1XEU"/>
<dbReference type="PDBsum" id="4CC4"/>
<dbReference type="SMR" id="P71451"/>
<dbReference type="IntAct" id="P71451">
    <property type="interactions" value="3"/>
</dbReference>
<dbReference type="PATRIC" id="fig|1234141.3.peg.2214"/>
<dbReference type="EvolutionaryTrace" id="P71451"/>
<dbReference type="GO" id="GO:0005576">
    <property type="term" value="C:extracellular region"/>
    <property type="evidence" value="ECO:0007669"/>
    <property type="project" value="UniProtKB-SubCell"/>
</dbReference>
<dbReference type="GO" id="GO:0030430">
    <property type="term" value="C:host cell cytoplasm"/>
    <property type="evidence" value="ECO:0007669"/>
    <property type="project" value="UniProtKB-SubCell"/>
</dbReference>
<dbReference type="Gene3D" id="2.60.40.1220">
    <property type="match status" value="1"/>
</dbReference>
<dbReference type="Gene3D" id="3.80.10.10">
    <property type="entry name" value="Ribonuclease Inhibitor"/>
    <property type="match status" value="1"/>
</dbReference>
<dbReference type="InterPro" id="IPR014755">
    <property type="entry name" value="Cu-Rt/internalin_Ig-like"/>
</dbReference>
<dbReference type="InterPro" id="IPR014756">
    <property type="entry name" value="Ig_E-set"/>
</dbReference>
<dbReference type="InterPro" id="IPR012569">
    <property type="entry name" value="Inl_IR"/>
</dbReference>
<dbReference type="InterPro" id="IPR024634">
    <property type="entry name" value="Internalin_N"/>
</dbReference>
<dbReference type="InterPro" id="IPR001611">
    <property type="entry name" value="Leu-rich_rpt"/>
</dbReference>
<dbReference type="InterPro" id="IPR025875">
    <property type="entry name" value="Leu-rich_rpt_4"/>
</dbReference>
<dbReference type="InterPro" id="IPR003591">
    <property type="entry name" value="Leu-rich_rpt_typical-subtyp"/>
</dbReference>
<dbReference type="InterPro" id="IPR032675">
    <property type="entry name" value="LRR_dom_sf"/>
</dbReference>
<dbReference type="InterPro" id="IPR050836">
    <property type="entry name" value="SDS22/Internalin_LRR"/>
</dbReference>
<dbReference type="PANTHER" id="PTHR46652">
    <property type="entry name" value="LEUCINE-RICH REPEAT AND IQ DOMAIN-CONTAINING PROTEIN 1-RELATED"/>
    <property type="match status" value="1"/>
</dbReference>
<dbReference type="PANTHER" id="PTHR46652:SF3">
    <property type="entry name" value="LEUCINE-RICH REPEAT-CONTAINING PROTEIN 9"/>
    <property type="match status" value="1"/>
</dbReference>
<dbReference type="Pfam" id="PF12354">
    <property type="entry name" value="Internalin_N"/>
    <property type="match status" value="1"/>
</dbReference>
<dbReference type="Pfam" id="PF12799">
    <property type="entry name" value="LRR_4"/>
    <property type="match status" value="1"/>
</dbReference>
<dbReference type="Pfam" id="PF08191">
    <property type="entry name" value="LRR_adjacent"/>
    <property type="match status" value="1"/>
</dbReference>
<dbReference type="SMART" id="SM00365">
    <property type="entry name" value="LRR_SD22"/>
    <property type="match status" value="4"/>
</dbReference>
<dbReference type="SMART" id="SM00369">
    <property type="entry name" value="LRR_TYP"/>
    <property type="match status" value="4"/>
</dbReference>
<dbReference type="SUPFAM" id="SSF81296">
    <property type="entry name" value="E set domains"/>
    <property type="match status" value="1"/>
</dbReference>
<dbReference type="SUPFAM" id="SSF52058">
    <property type="entry name" value="L domain-like"/>
    <property type="match status" value="1"/>
</dbReference>
<dbReference type="PROSITE" id="PS51450">
    <property type="entry name" value="LRR"/>
    <property type="match status" value="5"/>
</dbReference>
<evidence type="ECO:0000255" key="1"/>
<evidence type="ECO:0000269" key="2">
    <source>
    </source>
</evidence>
<evidence type="ECO:0000269" key="3">
    <source>
    </source>
</evidence>
<evidence type="ECO:0000269" key="4">
    <source>
    </source>
</evidence>
<evidence type="ECO:0000269" key="5">
    <source>
    </source>
</evidence>
<evidence type="ECO:0000269" key="6">
    <source>
    </source>
</evidence>
<evidence type="ECO:0000269" key="7">
    <source>
    </source>
</evidence>
<evidence type="ECO:0000269" key="8">
    <source>
    </source>
</evidence>
<evidence type="ECO:0000269" key="9">
    <source>
    </source>
</evidence>
<evidence type="ECO:0000269" key="10">
    <source>
    </source>
</evidence>
<evidence type="ECO:0000269" key="11">
    <source>
    </source>
</evidence>
<evidence type="ECO:0000303" key="12">
    <source>
    </source>
</evidence>
<evidence type="ECO:0000303" key="13">
    <source>
    </source>
</evidence>
<evidence type="ECO:0000305" key="14"/>
<evidence type="ECO:0000305" key="15">
    <source>
    </source>
</evidence>
<evidence type="ECO:0007744" key="16">
    <source>
        <dbReference type="PDB" id="1XEU"/>
    </source>
</evidence>
<evidence type="ECO:0007744" key="17">
    <source>
        <dbReference type="PDB" id="4CC4"/>
    </source>
</evidence>
<evidence type="ECO:0007829" key="18">
    <source>
        <dbReference type="PDB" id="1XEU"/>
    </source>
</evidence>
<evidence type="ECO:0007829" key="19">
    <source>
        <dbReference type="PDB" id="4CC4"/>
    </source>
</evidence>
<proteinExistence type="evidence at protein level"/>
<reference key="1">
    <citation type="journal article" date="1996" name="Mol. Microbiol.">
        <title>A new PrfA-regulated gene of Listeria monocytogenes encoding a small, secreted protein which belongs to the family of internalins.</title>
        <authorList>
            <person name="Engelbrecht F."/>
            <person name="Chun S."/>
            <person name="Ochs C."/>
            <person name="Hess J."/>
            <person name="Lottspeich F."/>
            <person name="Goebel W."/>
            <person name="Sokolovic Z."/>
        </authorList>
    </citation>
    <scope>NUCLEOTIDE SEQUENCE [GENOMIC DNA]</scope>
    <scope>PROTEIN SEQUENCE OF 64-93; 111-113; 121-132; 208-224 AND 274-296</scope>
    <scope>INDUCTION</scope>
    <scope>SUBCELLULAR LOCATION</scope>
    <scope>DISRUPTION PHENOTYPE</scope>
    <source>
        <strain>EGD / Mackaness</strain>
    </source>
</reference>
<reference key="2">
    <citation type="journal article" date="1997" name="Infect. Immun.">
        <title>Identification of a novel PrfA-regulated gene in Listeria monocytogenes that is highly homologous to the leucine-rich repeat containing internalin proteins.</title>
        <authorList>
            <person name="Domann E."/>
            <person name="Zechel S."/>
            <person name="Hain T."/>
            <person name="Lingnau A."/>
            <person name="Nichterlein T."/>
            <person name="Wehland J."/>
            <person name="Chakraborty T."/>
        </authorList>
    </citation>
    <scope>NUCLEOTIDE SEQUENCE [GENOMIC DNA]</scope>
    <scope>PROTEIN SEQUENCE OF 35-47</scope>
    <scope>SUBCELLULAR LOCATION</scope>
    <scope>INDUCTION</scope>
    <scope>DISRUPTION PHENOTYPE</scope>
    <source>
        <strain>EGD / Mackaness</strain>
    </source>
</reference>
<reference key="3">
    <citation type="journal article" date="1998" name="Mol. Gen. Genet.">
        <title>Sequence comparison of the chromosomal regions encompassing the internalin C genes (inlC) of Listeria monocytogenes and L. ivanovii.</title>
        <authorList>
            <person name="Engelbrecht F."/>
            <person name="Dickneite C."/>
            <person name="Lampidis R."/>
            <person name="Goetz M."/>
            <person name="Dasgupta U."/>
            <person name="Goebel W."/>
        </authorList>
    </citation>
    <scope>NUCLEOTIDE SEQUENCE [GENOMIC DNA]</scope>
    <source>
        <strain>EGD / Mackaness</strain>
    </source>
</reference>
<reference key="4">
    <citation type="journal article" date="1996" name="Infect. Immun.">
        <title>Identification and purification of novel internalin-related proteins in Listeria monocytogenes and Listeria ivanovii.</title>
        <authorList>
            <person name="Lingnau A."/>
            <person name="Chakraborty T."/>
            <person name="Niebuhr K."/>
            <person name="Domann E."/>
            <person name="Wehland J."/>
        </authorList>
    </citation>
    <scope>PROTEIN SEQUENCE OF 35-66; 73-96; 145-154; 208-217; 226-236 AND 274-296</scope>
    <scope>SUBCELLULAR LOCATION</scope>
    <scope>INDUCTION</scope>
    <scope>MASS SPECTROMETRY</scope>
    <source>
        <strain>EGD / Mackaness</strain>
    </source>
</reference>
<reference key="5">
    <citation type="journal article" date="1997" name="Infect. Immun.">
        <title>Listeriolysin and IrpA are major protein targets of the human humoral response against Listeria monocytogenes.</title>
        <authorList>
            <person name="Grenningloh R."/>
            <person name="Darji A."/>
            <person name="Wehland J."/>
            <person name="Chakraborty T."/>
            <person name="Weiss S."/>
        </authorList>
    </citation>
    <scope>ANTIGENICITY</scope>
</reference>
<reference key="6">
    <citation type="journal article" date="2008" name="Arch. Microbiol.">
        <title>Listeria monocytogenes internalins bind to the human intestinal mucin MUC2.</title>
        <authorList>
            <person name="Linden S.K."/>
            <person name="Bierne H."/>
            <person name="Sabet C."/>
            <person name="Png C.W."/>
            <person name="Florin T.H."/>
            <person name="McGuckin M.A."/>
            <person name="Cossart P."/>
        </authorList>
    </citation>
    <scope>INTERACTION WITH HUMAN MUC2</scope>
    <scope>SUBUNIT</scope>
</reference>
<reference key="7">
    <citation type="journal article" date="2009" name="Nat. Cell Biol.">
        <title>The bacterial virulence factor InlC perturbs apical cell junctions and promotes cell-to-cell spread of Listeria.</title>
        <authorList>
            <person name="Rajabian T."/>
            <person name="Gavicherla B."/>
            <person name="Heisig M."/>
            <person name="Mueller-Altrock S."/>
            <person name="Goebel W."/>
            <person name="Gray-Owen S.D."/>
            <person name="Ireton K."/>
        </authorList>
    </citation>
    <scope>FUNCTION</scope>
    <scope>INTERACTION WITH HUMAN DNMBP</scope>
    <scope>INDUCTION</scope>
    <scope>DISRUPTION PHENOTYPE</scope>
    <scope>MUTAGENESIS OF LYS-173</scope>
    <source>
        <strain>EGD / Mackaness</strain>
    </source>
</reference>
<reference key="8">
    <citation type="journal article" date="2010" name="Proc. Natl. Acad. Sci. U.S.A.">
        <title>The Listeria monocytogenes InlC protein interferes with innate immune responses by targeting the I{kappa}B kinase subunit IKK{alpha}.</title>
        <authorList>
            <person name="Gouin E."/>
            <person name="Adib-Conquy M."/>
            <person name="Balestrino D."/>
            <person name="Nahori M.A."/>
            <person name="Villiers V."/>
            <person name="Colland F."/>
            <person name="Dramsi S."/>
            <person name="Dussurget O."/>
            <person name="Cossart P."/>
        </authorList>
    </citation>
    <scope>FUNCTION</scope>
    <scope>INTERACTION WITH HUMAN IKKA (CHUK)</scope>
    <scope>SUBCELLULAR LOCATION</scope>
    <scope>INDUCTION</scope>
    <scope>DISRUPTION PHENOTYPE</scope>
    <source>
        <strain>EGD / Mackaness</strain>
    </source>
</reference>
<reference key="9">
    <citation type="journal article" date="2013" name="Infect. Immun.">
        <title>Impact of the Listeria monocytogenes protein InlC on infection in mice.</title>
        <authorList>
            <person name="Leung N."/>
            <person name="Gianfelice A."/>
            <person name="Gray-Owen S.D."/>
            <person name="Ireton K."/>
        </authorList>
    </citation>
    <scope>FUNCTION</scope>
    <scope>DISRUPTION PHENOTYPE</scope>
    <scope>MUTAGENESIS OF LYS-173</scope>
    <source>
        <strain>EGD / Mackaness</strain>
    </source>
</reference>
<reference evidence="16" key="10">
    <citation type="journal article" date="2006" name="Acta Crystallogr. D">
        <title>Structure of internalin C from Listeria monocytogenes.</title>
        <authorList>
            <person name="Ooi A."/>
            <person name="Hussain S."/>
            <person name="Seyedarabi A."/>
            <person name="Pickersgill R.W."/>
        </authorList>
    </citation>
    <scope>X-RAY CRYSTALLOGRAPHY (2.05 ANGSTROMS) OF 35-297</scope>
    <scope>DOMAIN</scope>
</reference>
<reference evidence="17" key="11">
    <citation type="journal article" date="2014" name="Structure">
        <title>Structural details of human tuba recruitment by InlC of Listeria monocytogenes elucidate bacterial cell-cell spreading.</title>
        <authorList>
            <person name="Polle L."/>
            <person name="Rigano L.A."/>
            <person name="Julian R."/>
            <person name="Ireton K."/>
            <person name="Schubert W.D."/>
        </authorList>
    </citation>
    <scope>X-RAY CRYSTALLOGRAPHY (2.60 ANGSTROMS) OF 35-297 IN COMPLEX WITH HUMAN DNMBP (TUBA)</scope>
    <scope>FUNCTION</scope>
    <scope>SUBUNIT</scope>
    <scope>DOMAIN</scope>
    <scope>MUTAGENESIS OF PHE-146; LYS-173 AND 246-TYR-TYR-247</scope>
    <source>
        <strain>EGD / Mackaness</strain>
    </source>
</reference>
<comment type="function">
    <text evidence="4 5 7 11">A virulence enhancer that has at least 2 dissociable functions in infection; it impairs translocation of host transcription factor NF-kappa-B to the nucleus and antagonizes the function of the Tuba dynamin-binding protein, promoting bacterial spreading (PubMed:19767742, PubMed:20855622, PubMed:24332715). Perturbs the morphology of host cell junctions by impairing host DNMBP (Tuba) and WASL interaction, altering cortical tension at the cell junctions and allowing bacteria to more efficiently form bacteria-filled cell protrusions which promote bacterial spreading within infected host tissue (PubMed:19767742, PubMed:24332715). Down-regulates the host inflammation response usually induced by Listeria infection. Interacts with host I-kappa-B kinase alpha (IKKA, CHUK), which prevents IKKA from phosphorylating NF-kappa-B inhibitor alpha (IKBA, NFKBIA) and thus delays degradation of phospho-IKBA. Translocation of host transcription factor p65 (a subunit of NF-kappa-B, RELA) into the nucleus is impaired, which prevents activation of NF-KB-regulated genes (PubMed:20855622). Recognized by serum from healthy humans exposed to L.monocytogenes as well from patients who have recovered from listeriosis (PubMed:9284184).</text>
</comment>
<comment type="subunit">
    <text evidence="3 4 5 7">Interacts in vitro with human intestinal mucin-2 (MUC2) but not with mucin-1; binding is slightly better at pH 5.5, (the pH of the intestine) than at pH 7.4 (PubMed:18327567). Interacts with the SH3 6 domain of human DNMBP (Tuba) (PubMed:19767742, PubMed:24332715). Interacts with I-kappa-B kinase alpha (IKKA, CHUK) (PubMed:20855622).</text>
</comment>
<comment type="interaction">
    <interactant intactId="EBI-21019720">
        <id>P71451</id>
    </interactant>
    <interactant intactId="EBI-81249">
        <id>O15111</id>
        <label>CHUK</label>
    </interactant>
    <organismsDiffer>true</organismsDiffer>
    <experiments>3</experiments>
</comment>
<comment type="interaction">
    <interactant intactId="EBI-21019720">
        <id>P71451</id>
    </interactant>
    <interactant intactId="EBI-16085546">
        <id>Q6XZF7-1</id>
        <label>DNMBP</label>
    </interactant>
    <organismsDiffer>true</organismsDiffer>
    <experiments>6</experiments>
</comment>
<comment type="subcellular location">
    <subcellularLocation>
        <location evidence="8 9 10">Secreted</location>
    </subcellularLocation>
    <subcellularLocation>
        <location evidence="5">Host cytoplasm</location>
    </subcellularLocation>
</comment>
<comment type="induction">
    <text evidence="4 5 8 9 10">Expression induced by PrfA; expressed in bacterial growth medium at very low levels in the absence of extra copies of prfA (at protein level) (PubMed:8641748, PubMed:8878044, PubMed:8975898). Transcription induced upon a shift to growth in minimal medium and also in infected mouse cells; expression is low 1 hour post-infection and reaches its maximum 5 hour post-infection (PubMed:8878044). Detected by 5 hours post infection in human Caco-2 cells (at protein level) (PubMed:19767742). In infected HeLa cells expression increases gradually over time (at protein level) (PubMed:20855622).</text>
</comment>
<comment type="domain">
    <text evidence="2 7">Consists of the cap domain (residues 35-76) and LRR repeat region (77-213) and an Ig-like region (207-297), where the latter 2 overlap slightly (PubMed:17057330). The LRR repear region interacts via its concave face with host DNMBP (Tuba) (PubMed:24332715).</text>
</comment>
<comment type="mass spectrometry"/>
<comment type="disruption phenotype">
    <text evidence="4 5 6 9 10">Significant reduction in virulence when injected intravenously into C57BL/6 mice; no effect on intracellular growth of bacteria in infected cell lines (PubMed:20855622, PubMed:23403554, PubMed:8878044). Slightly reduced virulence when injected intravenously into BALB/c mice; no effect on intracellular growth of bacteria in infected cell lines (PubMed:8975898). Decreased bacterial spreading in polarized epithelial cells (human Caco-2 BBE1 cell line), decreased formation of host cell plasma membrane protusions, host cell junctions are not perturbed by bacteria (PubMed:19767742). Significantly increased production of cytokines, significantly increased recruitment of neutrophils to the peritoneum, after intraperitoneal injection into BALB/c mice (PubMed:20855622).</text>
</comment>
<comment type="miscellaneous">
    <text evidence="15">In infected host cells Listeria surface protein ActA induces formation of F-actin 'comet tails' that propel bacteria. Motile bacteria ultimately encounter the host plasma membrane, deforming it into protrusions. Finally, pathogen-containing protrusions are engulfed by adjacent mammalian cells.</text>
</comment>
<comment type="similarity">
    <text evidence="14">Belongs to the internalin family.</text>
</comment>
<comment type="caution">
    <text evidence="4 6 7">Conflicting results are seen for mutagenesis of Lys-173. It is seen to reduce binding to the SH3 6 domain of human DNMBP (Tuba) by surface plasmon resonance (PubMed:19767742). In the crystal structure with Tuba this reside is seen not to be in the protein-protein interface, and pull-down assays show it interacts normally with Tuba (PubMed:24332715). Two studies show this residue is important for virulence in the mouse model (PubMed:19767742, PubMed:23403554).</text>
</comment>
<name>INLC_LISMG</name>